<protein>
    <recommendedName>
        <fullName evidence="1">Ribosome-releasing factor 2, mitochondrial</fullName>
        <shortName evidence="1">RRF2mt</shortName>
    </recommendedName>
    <alternativeName>
        <fullName evidence="1">Elongation factor G 2, mitochondrial</fullName>
        <shortName evidence="1">EF-G2mt</shortName>
        <shortName evidence="1">mEF-G 2</shortName>
    </alternativeName>
</protein>
<sequence length="802" mass="88188">MASRHYSAKNTTKKIRNIGIIAHIDAGKTTTTERILYLSGTIKHLGNVDEGDTTMDFLPAERERGITIASAATSFNWNNHTVNLIDTPGHADFTFEVIRSIRVLDGAVCILDGVAGVEAQTEKVWKQASEMGIPKIAFVNKMDRAGAGFGRTVKEIVSKLRTRVALLTVPVFSKSSDQVFEGVVDILNGCVITWTTGGDGKQTVVVPVSEASAEVQEEYQKARTALVETLTELDEELVEKFLESEDYMQITTEDIKRALRTATINNDIVPVLCGASFRNIGVQPLMDAVVDFLPSPAERPPTDALIAKSYTGGKKSKVIPERAITLDDSMKNLCCALCFKVVQDPQKGTLVYVRVYKGELKQNSVLYNTTSGTKDRVSRLLKVHADTTSEVTSITEGNIGVILGSQGLATGDTIVCHSIKKDGVMKLPPDNRLIQLKPIAVPPPVFFVRIDPASIGDTRPMNEALELLLREDPSLNVSFDDETNQTTLSGMGELHLEIAQNRLIEDFKANIVIGPIIISYKETLNEPTKSITKTVEPEPGAVSTVRLRLEPITEMDEACENENVIDHEQNTVSFPYELSDADLESVGEGNQRISFERDTKELTPEIMEECFRVGSIPPLVSCGPVCRLPLRSVRVVIEAWHIAQHINNTASLKTATRLAIMEALSTANATLMEPIMNVYVSVNEADIGLVVKDLSGSRNGQIVSIMDPSQLNEGDIHSEEYVAMATNTYVPADYTMYLSKHQDQTRTQQSVVHARVPLREMVGYLKTLRSMTQGRGSFTMEVDQYEAVTPDKIQPIVDSIFA</sequence>
<name>RRF2M_YARLI</name>
<feature type="chain" id="PRO_0000385623" description="Ribosome-releasing factor 2, mitochondrial">
    <location>
        <begin position="1"/>
        <end position="802"/>
    </location>
</feature>
<feature type="domain" description="tr-type G">
    <location>
        <begin position="13"/>
        <end position="297"/>
    </location>
</feature>
<feature type="binding site" evidence="1">
    <location>
        <begin position="22"/>
        <end position="29"/>
    </location>
    <ligand>
        <name>GTP</name>
        <dbReference type="ChEBI" id="CHEBI:37565"/>
    </ligand>
</feature>
<feature type="binding site" evidence="1">
    <location>
        <begin position="86"/>
        <end position="90"/>
    </location>
    <ligand>
        <name>GTP</name>
        <dbReference type="ChEBI" id="CHEBI:37565"/>
    </ligand>
</feature>
<feature type="binding site" evidence="1">
    <location>
        <begin position="140"/>
        <end position="143"/>
    </location>
    <ligand>
        <name>GTP</name>
        <dbReference type="ChEBI" id="CHEBI:37565"/>
    </ligand>
</feature>
<evidence type="ECO:0000255" key="1">
    <source>
        <dbReference type="HAMAP-Rule" id="MF_03059"/>
    </source>
</evidence>
<reference key="1">
    <citation type="journal article" date="2004" name="Nature">
        <title>Genome evolution in yeasts.</title>
        <authorList>
            <person name="Dujon B."/>
            <person name="Sherman D."/>
            <person name="Fischer G."/>
            <person name="Durrens P."/>
            <person name="Casaregola S."/>
            <person name="Lafontaine I."/>
            <person name="de Montigny J."/>
            <person name="Marck C."/>
            <person name="Neuveglise C."/>
            <person name="Talla E."/>
            <person name="Goffard N."/>
            <person name="Frangeul L."/>
            <person name="Aigle M."/>
            <person name="Anthouard V."/>
            <person name="Babour A."/>
            <person name="Barbe V."/>
            <person name="Barnay S."/>
            <person name="Blanchin S."/>
            <person name="Beckerich J.-M."/>
            <person name="Beyne E."/>
            <person name="Bleykasten C."/>
            <person name="Boisrame A."/>
            <person name="Boyer J."/>
            <person name="Cattolico L."/>
            <person name="Confanioleri F."/>
            <person name="de Daruvar A."/>
            <person name="Despons L."/>
            <person name="Fabre E."/>
            <person name="Fairhead C."/>
            <person name="Ferry-Dumazet H."/>
            <person name="Groppi A."/>
            <person name="Hantraye F."/>
            <person name="Hennequin C."/>
            <person name="Jauniaux N."/>
            <person name="Joyet P."/>
            <person name="Kachouri R."/>
            <person name="Kerrest A."/>
            <person name="Koszul R."/>
            <person name="Lemaire M."/>
            <person name="Lesur I."/>
            <person name="Ma L."/>
            <person name="Muller H."/>
            <person name="Nicaud J.-M."/>
            <person name="Nikolski M."/>
            <person name="Oztas S."/>
            <person name="Ozier-Kalogeropoulos O."/>
            <person name="Pellenz S."/>
            <person name="Potier S."/>
            <person name="Richard G.-F."/>
            <person name="Straub M.-L."/>
            <person name="Suleau A."/>
            <person name="Swennen D."/>
            <person name="Tekaia F."/>
            <person name="Wesolowski-Louvel M."/>
            <person name="Westhof E."/>
            <person name="Wirth B."/>
            <person name="Zeniou-Meyer M."/>
            <person name="Zivanovic Y."/>
            <person name="Bolotin-Fukuhara M."/>
            <person name="Thierry A."/>
            <person name="Bouchier C."/>
            <person name="Caudron B."/>
            <person name="Scarpelli C."/>
            <person name="Gaillardin C."/>
            <person name="Weissenbach J."/>
            <person name="Wincker P."/>
            <person name="Souciet J.-L."/>
        </authorList>
    </citation>
    <scope>NUCLEOTIDE SEQUENCE [LARGE SCALE GENOMIC DNA]</scope>
    <source>
        <strain>CLIB 122 / E 150</strain>
    </source>
</reference>
<organism>
    <name type="scientific">Yarrowia lipolytica (strain CLIB 122 / E 150)</name>
    <name type="common">Yeast</name>
    <name type="synonym">Candida lipolytica</name>
    <dbReference type="NCBI Taxonomy" id="284591"/>
    <lineage>
        <taxon>Eukaryota</taxon>
        <taxon>Fungi</taxon>
        <taxon>Dikarya</taxon>
        <taxon>Ascomycota</taxon>
        <taxon>Saccharomycotina</taxon>
        <taxon>Dipodascomycetes</taxon>
        <taxon>Dipodascales</taxon>
        <taxon>Dipodascales incertae sedis</taxon>
        <taxon>Yarrowia</taxon>
    </lineage>
</organism>
<proteinExistence type="inferred from homology"/>
<dbReference type="EMBL" id="CR382129">
    <property type="protein sequence ID" value="CAG82302.1"/>
    <property type="molecule type" value="Genomic_DNA"/>
</dbReference>
<dbReference type="RefSeq" id="XP_501982.1">
    <property type="nucleotide sequence ID" value="XM_501982.1"/>
</dbReference>
<dbReference type="SMR" id="Q6CBI0"/>
<dbReference type="FunCoup" id="Q6CBI0">
    <property type="interactions" value="613"/>
</dbReference>
<dbReference type="STRING" id="284591.Q6CBI0"/>
<dbReference type="EnsemblFungi" id="CAG82302">
    <property type="protein sequence ID" value="CAG82302"/>
    <property type="gene ID" value="YALI0_C18557g"/>
</dbReference>
<dbReference type="KEGG" id="yli:2909984"/>
<dbReference type="VEuPathDB" id="FungiDB:YALI0_C18557g"/>
<dbReference type="HOGENOM" id="CLU_002794_4_1_1"/>
<dbReference type="InParanoid" id="Q6CBI0"/>
<dbReference type="OMA" id="GPQFTFP"/>
<dbReference type="OrthoDB" id="972at4891"/>
<dbReference type="Proteomes" id="UP000001300">
    <property type="component" value="Chromosome C"/>
</dbReference>
<dbReference type="GO" id="GO:0005739">
    <property type="term" value="C:mitochondrion"/>
    <property type="evidence" value="ECO:0007669"/>
    <property type="project" value="UniProtKB-SubCell"/>
</dbReference>
<dbReference type="GO" id="GO:0005525">
    <property type="term" value="F:GTP binding"/>
    <property type="evidence" value="ECO:0007669"/>
    <property type="project" value="UniProtKB-UniRule"/>
</dbReference>
<dbReference type="GO" id="GO:0003924">
    <property type="term" value="F:GTPase activity"/>
    <property type="evidence" value="ECO:0000318"/>
    <property type="project" value="GO_Central"/>
</dbReference>
<dbReference type="GO" id="GO:0032543">
    <property type="term" value="P:mitochondrial translation"/>
    <property type="evidence" value="ECO:0000318"/>
    <property type="project" value="GO_Central"/>
</dbReference>
<dbReference type="GO" id="GO:0032790">
    <property type="term" value="P:ribosome disassembly"/>
    <property type="evidence" value="ECO:0000318"/>
    <property type="project" value="GO_Central"/>
</dbReference>
<dbReference type="CDD" id="cd01886">
    <property type="entry name" value="EF-G"/>
    <property type="match status" value="1"/>
</dbReference>
<dbReference type="CDD" id="cd16262">
    <property type="entry name" value="EFG_III"/>
    <property type="match status" value="1"/>
</dbReference>
<dbReference type="CDD" id="cd03713">
    <property type="entry name" value="EFG_mtEFG_C"/>
    <property type="match status" value="1"/>
</dbReference>
<dbReference type="CDD" id="cd04092">
    <property type="entry name" value="mtEFG2_II_like"/>
    <property type="match status" value="1"/>
</dbReference>
<dbReference type="FunFam" id="2.40.30.10:FF:000106">
    <property type="entry name" value="Ribosome-releasing factor 2, mitochondrial"/>
    <property type="match status" value="1"/>
</dbReference>
<dbReference type="FunFam" id="3.30.70.870:FF:000007">
    <property type="entry name" value="Ribosome-releasing factor 2, mitochondrial"/>
    <property type="match status" value="1"/>
</dbReference>
<dbReference type="FunFam" id="3.40.50.300:FF:001636">
    <property type="entry name" value="Ribosome-releasing factor 2, mitochondrial"/>
    <property type="match status" value="1"/>
</dbReference>
<dbReference type="Gene3D" id="3.30.70.240">
    <property type="match status" value="1"/>
</dbReference>
<dbReference type="Gene3D" id="3.30.70.870">
    <property type="entry name" value="Elongation Factor G (Translational Gtpase), domain 3"/>
    <property type="match status" value="1"/>
</dbReference>
<dbReference type="Gene3D" id="3.40.50.300">
    <property type="entry name" value="P-loop containing nucleotide triphosphate hydrolases"/>
    <property type="match status" value="1"/>
</dbReference>
<dbReference type="Gene3D" id="2.40.30.10">
    <property type="entry name" value="Translation factors"/>
    <property type="match status" value="1"/>
</dbReference>
<dbReference type="HAMAP" id="MF_03059">
    <property type="entry name" value="mEF_G_2"/>
    <property type="match status" value="1"/>
</dbReference>
<dbReference type="InterPro" id="IPR053905">
    <property type="entry name" value="EF-G-like_DII"/>
</dbReference>
<dbReference type="InterPro" id="IPR030851">
    <property type="entry name" value="EFG2"/>
</dbReference>
<dbReference type="InterPro" id="IPR041095">
    <property type="entry name" value="EFG_II"/>
</dbReference>
<dbReference type="InterPro" id="IPR009022">
    <property type="entry name" value="EFG_III"/>
</dbReference>
<dbReference type="InterPro" id="IPR035647">
    <property type="entry name" value="EFG_III/V"/>
</dbReference>
<dbReference type="InterPro" id="IPR035649">
    <property type="entry name" value="EFG_V"/>
</dbReference>
<dbReference type="InterPro" id="IPR000640">
    <property type="entry name" value="EFG_V-like"/>
</dbReference>
<dbReference type="InterPro" id="IPR031157">
    <property type="entry name" value="G_TR_CS"/>
</dbReference>
<dbReference type="InterPro" id="IPR027417">
    <property type="entry name" value="P-loop_NTPase"/>
</dbReference>
<dbReference type="InterPro" id="IPR005225">
    <property type="entry name" value="Small_GTP-bd"/>
</dbReference>
<dbReference type="InterPro" id="IPR000795">
    <property type="entry name" value="T_Tr_GTP-bd_dom"/>
</dbReference>
<dbReference type="InterPro" id="IPR009000">
    <property type="entry name" value="Transl_B-barrel_sf"/>
</dbReference>
<dbReference type="NCBIfam" id="TIGR00231">
    <property type="entry name" value="small_GTP"/>
    <property type="match status" value="1"/>
</dbReference>
<dbReference type="PANTHER" id="PTHR43261:SF1">
    <property type="entry name" value="RIBOSOME-RELEASING FACTOR 2, MITOCHONDRIAL"/>
    <property type="match status" value="1"/>
</dbReference>
<dbReference type="PANTHER" id="PTHR43261">
    <property type="entry name" value="TRANSLATION ELONGATION FACTOR G-RELATED"/>
    <property type="match status" value="1"/>
</dbReference>
<dbReference type="Pfam" id="PF22042">
    <property type="entry name" value="EF-G_D2"/>
    <property type="match status" value="1"/>
</dbReference>
<dbReference type="Pfam" id="PF00679">
    <property type="entry name" value="EFG_C"/>
    <property type="match status" value="1"/>
</dbReference>
<dbReference type="Pfam" id="PF14492">
    <property type="entry name" value="EFG_III"/>
    <property type="match status" value="1"/>
</dbReference>
<dbReference type="Pfam" id="PF00009">
    <property type="entry name" value="GTP_EFTU"/>
    <property type="match status" value="1"/>
</dbReference>
<dbReference type="PRINTS" id="PR00315">
    <property type="entry name" value="ELONGATNFCT"/>
</dbReference>
<dbReference type="SMART" id="SM00838">
    <property type="entry name" value="EFG_C"/>
    <property type="match status" value="1"/>
</dbReference>
<dbReference type="SUPFAM" id="SSF54980">
    <property type="entry name" value="EF-G C-terminal domain-like"/>
    <property type="match status" value="2"/>
</dbReference>
<dbReference type="SUPFAM" id="SSF52540">
    <property type="entry name" value="P-loop containing nucleoside triphosphate hydrolases"/>
    <property type="match status" value="1"/>
</dbReference>
<dbReference type="SUPFAM" id="SSF50447">
    <property type="entry name" value="Translation proteins"/>
    <property type="match status" value="1"/>
</dbReference>
<dbReference type="PROSITE" id="PS00301">
    <property type="entry name" value="G_TR_1"/>
    <property type="match status" value="1"/>
</dbReference>
<dbReference type="PROSITE" id="PS51722">
    <property type="entry name" value="G_TR_2"/>
    <property type="match status" value="1"/>
</dbReference>
<comment type="function">
    <text evidence="1">Mitochondrial GTPase that mediates the disassembly of ribosomes from messenger RNA at the termination of mitochondrial protein biosynthesis. Not involved in the GTP-dependent ribosomal translocation step during translation elongation.</text>
</comment>
<comment type="subcellular location">
    <subcellularLocation>
        <location evidence="1">Mitochondrion</location>
    </subcellularLocation>
</comment>
<comment type="miscellaneous">
    <text evidence="1">This protein may be expected to contain an N-terminal transit peptide but none has been predicted.</text>
</comment>
<comment type="similarity">
    <text evidence="1">Belongs to the TRAFAC class translation factor GTPase superfamily. Classic translation factor GTPase family. EF-G/EF-2 subfamily.</text>
</comment>
<gene>
    <name evidence="1" type="primary">MEF2</name>
    <name type="ordered locus">YALI0C18557g</name>
</gene>
<accession>Q6CBI0</accession>
<keyword id="KW-0342">GTP-binding</keyword>
<keyword id="KW-0496">Mitochondrion</keyword>
<keyword id="KW-0547">Nucleotide-binding</keyword>
<keyword id="KW-0648">Protein biosynthesis</keyword>
<keyword id="KW-1185">Reference proteome</keyword>